<organism>
    <name type="scientific">Burkholderia pseudomallei (strain 1710b)</name>
    <dbReference type="NCBI Taxonomy" id="320372"/>
    <lineage>
        <taxon>Bacteria</taxon>
        <taxon>Pseudomonadati</taxon>
        <taxon>Pseudomonadota</taxon>
        <taxon>Betaproteobacteria</taxon>
        <taxon>Burkholderiales</taxon>
        <taxon>Burkholderiaceae</taxon>
        <taxon>Burkholderia</taxon>
        <taxon>pseudomallei group</taxon>
    </lineage>
</organism>
<name>ILVD_BURP1</name>
<protein>
    <recommendedName>
        <fullName evidence="1">Dihydroxy-acid dehydratase</fullName>
        <shortName evidence="1">DAD</shortName>
        <ecNumber evidence="1">4.2.1.9</ecNumber>
    </recommendedName>
</protein>
<dbReference type="EC" id="4.2.1.9" evidence="1"/>
<dbReference type="EMBL" id="CP000124">
    <property type="protein sequence ID" value="ABA50104.1"/>
    <property type="molecule type" value="Genomic_DNA"/>
</dbReference>
<dbReference type="RefSeq" id="WP_004526304.1">
    <property type="nucleotide sequence ID" value="NC_007434.1"/>
</dbReference>
<dbReference type="SMR" id="Q3JV12"/>
<dbReference type="EnsemblBacteria" id="ABA50104">
    <property type="protein sequence ID" value="ABA50104"/>
    <property type="gene ID" value="BURPS1710b_1180"/>
</dbReference>
<dbReference type="KEGG" id="bpm:BURPS1710b_1180"/>
<dbReference type="HOGENOM" id="CLU_014271_4_1_4"/>
<dbReference type="UniPathway" id="UPA00047">
    <property type="reaction ID" value="UER00057"/>
</dbReference>
<dbReference type="UniPathway" id="UPA00049">
    <property type="reaction ID" value="UER00061"/>
</dbReference>
<dbReference type="Proteomes" id="UP000002700">
    <property type="component" value="Chromosome I"/>
</dbReference>
<dbReference type="GO" id="GO:0051537">
    <property type="term" value="F:2 iron, 2 sulfur cluster binding"/>
    <property type="evidence" value="ECO:0007669"/>
    <property type="project" value="UniProtKB-UniRule"/>
</dbReference>
<dbReference type="GO" id="GO:0004160">
    <property type="term" value="F:dihydroxy-acid dehydratase activity"/>
    <property type="evidence" value="ECO:0007669"/>
    <property type="project" value="UniProtKB-UniRule"/>
</dbReference>
<dbReference type="GO" id="GO:0000287">
    <property type="term" value="F:magnesium ion binding"/>
    <property type="evidence" value="ECO:0007669"/>
    <property type="project" value="UniProtKB-UniRule"/>
</dbReference>
<dbReference type="GO" id="GO:0009097">
    <property type="term" value="P:isoleucine biosynthetic process"/>
    <property type="evidence" value="ECO:0007669"/>
    <property type="project" value="UniProtKB-UniRule"/>
</dbReference>
<dbReference type="GO" id="GO:0009099">
    <property type="term" value="P:L-valine biosynthetic process"/>
    <property type="evidence" value="ECO:0007669"/>
    <property type="project" value="UniProtKB-UniRule"/>
</dbReference>
<dbReference type="FunFam" id="3.50.30.80:FF:000001">
    <property type="entry name" value="Dihydroxy-acid dehydratase"/>
    <property type="match status" value="1"/>
</dbReference>
<dbReference type="Gene3D" id="3.50.30.80">
    <property type="entry name" value="IlvD/EDD C-terminal domain-like"/>
    <property type="match status" value="1"/>
</dbReference>
<dbReference type="HAMAP" id="MF_00012">
    <property type="entry name" value="IlvD"/>
    <property type="match status" value="1"/>
</dbReference>
<dbReference type="InterPro" id="IPR050165">
    <property type="entry name" value="DHAD_IlvD/Edd"/>
</dbReference>
<dbReference type="InterPro" id="IPR042096">
    <property type="entry name" value="Dihydro-acid_dehy_C"/>
</dbReference>
<dbReference type="InterPro" id="IPR004404">
    <property type="entry name" value="DihydroxyA_deHydtase"/>
</dbReference>
<dbReference type="InterPro" id="IPR020558">
    <property type="entry name" value="DiOHA_6PGluconate_deHydtase_CS"/>
</dbReference>
<dbReference type="InterPro" id="IPR056740">
    <property type="entry name" value="ILV_EDD_C"/>
</dbReference>
<dbReference type="InterPro" id="IPR000581">
    <property type="entry name" value="ILV_EDD_N"/>
</dbReference>
<dbReference type="InterPro" id="IPR037237">
    <property type="entry name" value="IlvD/EDD_N"/>
</dbReference>
<dbReference type="NCBIfam" id="TIGR00110">
    <property type="entry name" value="ilvD"/>
    <property type="match status" value="1"/>
</dbReference>
<dbReference type="NCBIfam" id="NF002068">
    <property type="entry name" value="PRK00911.1"/>
    <property type="match status" value="1"/>
</dbReference>
<dbReference type="PANTHER" id="PTHR21000">
    <property type="entry name" value="DIHYDROXY-ACID DEHYDRATASE DAD"/>
    <property type="match status" value="1"/>
</dbReference>
<dbReference type="PANTHER" id="PTHR21000:SF5">
    <property type="entry name" value="DIHYDROXY-ACID DEHYDRATASE, MITOCHONDRIAL"/>
    <property type="match status" value="1"/>
</dbReference>
<dbReference type="Pfam" id="PF24877">
    <property type="entry name" value="ILV_EDD_C"/>
    <property type="match status" value="1"/>
</dbReference>
<dbReference type="Pfam" id="PF00920">
    <property type="entry name" value="ILVD_EDD_N"/>
    <property type="match status" value="1"/>
</dbReference>
<dbReference type="SUPFAM" id="SSF143975">
    <property type="entry name" value="IlvD/EDD N-terminal domain-like"/>
    <property type="match status" value="1"/>
</dbReference>
<dbReference type="SUPFAM" id="SSF52016">
    <property type="entry name" value="LeuD/IlvD-like"/>
    <property type="match status" value="1"/>
</dbReference>
<dbReference type="PROSITE" id="PS00886">
    <property type="entry name" value="ILVD_EDD_1"/>
    <property type="match status" value="1"/>
</dbReference>
<dbReference type="PROSITE" id="PS00887">
    <property type="entry name" value="ILVD_EDD_2"/>
    <property type="match status" value="1"/>
</dbReference>
<comment type="function">
    <text evidence="1">Functions in the biosynthesis of branched-chain amino acids. Catalyzes the dehydration of (2R,3R)-2,3-dihydroxy-3-methylpentanoate (2,3-dihydroxy-3-methylvalerate) into 2-oxo-3-methylpentanoate (2-oxo-3-methylvalerate) and of (2R)-2,3-dihydroxy-3-methylbutanoate (2,3-dihydroxyisovalerate) into 2-oxo-3-methylbutanoate (2-oxoisovalerate), the penultimate precursor to L-isoleucine and L-valine, respectively.</text>
</comment>
<comment type="catalytic activity">
    <reaction evidence="1">
        <text>(2R)-2,3-dihydroxy-3-methylbutanoate = 3-methyl-2-oxobutanoate + H2O</text>
        <dbReference type="Rhea" id="RHEA:24809"/>
        <dbReference type="ChEBI" id="CHEBI:11851"/>
        <dbReference type="ChEBI" id="CHEBI:15377"/>
        <dbReference type="ChEBI" id="CHEBI:49072"/>
        <dbReference type="EC" id="4.2.1.9"/>
    </reaction>
    <physiologicalReaction direction="left-to-right" evidence="1">
        <dbReference type="Rhea" id="RHEA:24810"/>
    </physiologicalReaction>
</comment>
<comment type="catalytic activity">
    <reaction evidence="1">
        <text>(2R,3R)-2,3-dihydroxy-3-methylpentanoate = (S)-3-methyl-2-oxopentanoate + H2O</text>
        <dbReference type="Rhea" id="RHEA:27694"/>
        <dbReference type="ChEBI" id="CHEBI:15377"/>
        <dbReference type="ChEBI" id="CHEBI:35146"/>
        <dbReference type="ChEBI" id="CHEBI:49258"/>
        <dbReference type="EC" id="4.2.1.9"/>
    </reaction>
    <physiologicalReaction direction="left-to-right" evidence="1">
        <dbReference type="Rhea" id="RHEA:27695"/>
    </physiologicalReaction>
</comment>
<comment type="cofactor">
    <cofactor evidence="1">
        <name>[2Fe-2S] cluster</name>
        <dbReference type="ChEBI" id="CHEBI:190135"/>
    </cofactor>
    <text evidence="1">Binds 1 [2Fe-2S] cluster per subunit. This cluster acts as a Lewis acid cofactor.</text>
</comment>
<comment type="cofactor">
    <cofactor evidence="1">
        <name>Mg(2+)</name>
        <dbReference type="ChEBI" id="CHEBI:18420"/>
    </cofactor>
</comment>
<comment type="pathway">
    <text evidence="1">Amino-acid biosynthesis; L-isoleucine biosynthesis; L-isoleucine from 2-oxobutanoate: step 3/4.</text>
</comment>
<comment type="pathway">
    <text evidence="1">Amino-acid biosynthesis; L-valine biosynthesis; L-valine from pyruvate: step 3/4.</text>
</comment>
<comment type="subunit">
    <text evidence="1">Homodimer.</text>
</comment>
<comment type="similarity">
    <text evidence="1">Belongs to the IlvD/Edd family.</text>
</comment>
<proteinExistence type="inferred from homology"/>
<gene>
    <name evidence="1" type="primary">ilvD</name>
    <name type="ordered locus">BURPS1710b_1180</name>
</gene>
<feature type="chain" id="PRO_0000225378" description="Dihydroxy-acid dehydratase">
    <location>
        <begin position="1"/>
        <end position="557"/>
    </location>
</feature>
<feature type="active site" description="Proton acceptor" evidence="1">
    <location>
        <position position="473"/>
    </location>
</feature>
<feature type="binding site" evidence="1">
    <location>
        <position position="50"/>
    </location>
    <ligand>
        <name>[2Fe-2S] cluster</name>
        <dbReference type="ChEBI" id="CHEBI:190135"/>
    </ligand>
</feature>
<feature type="binding site" evidence="1">
    <location>
        <position position="82"/>
    </location>
    <ligand>
        <name>Mg(2+)</name>
        <dbReference type="ChEBI" id="CHEBI:18420"/>
    </ligand>
</feature>
<feature type="binding site" evidence="1">
    <location>
        <position position="123"/>
    </location>
    <ligand>
        <name>[2Fe-2S] cluster</name>
        <dbReference type="ChEBI" id="CHEBI:190135"/>
    </ligand>
</feature>
<feature type="binding site" evidence="1">
    <location>
        <position position="124"/>
    </location>
    <ligand>
        <name>Mg(2+)</name>
        <dbReference type="ChEBI" id="CHEBI:18420"/>
    </ligand>
</feature>
<feature type="binding site" description="via carbamate group" evidence="1">
    <location>
        <position position="125"/>
    </location>
    <ligand>
        <name>Mg(2+)</name>
        <dbReference type="ChEBI" id="CHEBI:18420"/>
    </ligand>
</feature>
<feature type="binding site" evidence="1">
    <location>
        <position position="195"/>
    </location>
    <ligand>
        <name>[2Fe-2S] cluster</name>
        <dbReference type="ChEBI" id="CHEBI:190135"/>
    </ligand>
</feature>
<feature type="binding site" evidence="1">
    <location>
        <position position="447"/>
    </location>
    <ligand>
        <name>Mg(2+)</name>
        <dbReference type="ChEBI" id="CHEBI:18420"/>
    </ligand>
</feature>
<feature type="modified residue" description="N6-carboxylysine" evidence="1">
    <location>
        <position position="125"/>
    </location>
</feature>
<accession>Q3JV12</accession>
<sequence length="557" mass="59067">MSYNRRSKNITQGVARSPNRSMYYALGYQKEDFDKPMIGIANGHSTITPCNAGLQRLSDAAVAAVKDAGANPQIFGTPTISDGMSMGTEGMKYSLVSREVIADCIETCVQGQWMDGVVVVGGCDKNMPGGMIALARINVPGIYVYGGTIRPGHWKGHDLTIVSSFEAVGEFTAGRMSQEDFEGVEKNACPTTGSCGGMYTANTMSSSFEALGMSLLYSSTMANPDQEKVDSAAESARVLVEAVKKDLKPRDIITKQSIENAVSVIMATGGSTNAVLHYLAIAHAAEIDWSIEDFERIRKRVPVICDLKPSGQYVATDLHAAGGIPQVMKLLLDAGLLHGDCMTITGRTLAEELKDVPSVPRADQKVIHPIDQALYKEGHLAILKGNLAEDGAVAKITGLKNPVITGPARVFDDEQSALAAILDDRIRAGDVVVLRYLGPQGGPGMPEMLAPTSAIIGKGLGESVGLITDGRFSGGTWGMVVGHVAPEAFVGGTIALVQEGDSITIDAHKLLLQLNVDDAELARRRVAWKQPAPRYTRGVLAKYAALARPANQGAVTG</sequence>
<evidence type="ECO:0000255" key="1">
    <source>
        <dbReference type="HAMAP-Rule" id="MF_00012"/>
    </source>
</evidence>
<reference key="1">
    <citation type="journal article" date="2010" name="Genome Biol. Evol.">
        <title>Continuing evolution of Burkholderia mallei through genome reduction and large-scale rearrangements.</title>
        <authorList>
            <person name="Losada L."/>
            <person name="Ronning C.M."/>
            <person name="DeShazer D."/>
            <person name="Woods D."/>
            <person name="Fedorova N."/>
            <person name="Kim H.S."/>
            <person name="Shabalina S.A."/>
            <person name="Pearson T.R."/>
            <person name="Brinkac L."/>
            <person name="Tan P."/>
            <person name="Nandi T."/>
            <person name="Crabtree J."/>
            <person name="Badger J."/>
            <person name="Beckstrom-Sternberg S."/>
            <person name="Saqib M."/>
            <person name="Schutzer S.E."/>
            <person name="Keim P."/>
            <person name="Nierman W.C."/>
        </authorList>
    </citation>
    <scope>NUCLEOTIDE SEQUENCE [LARGE SCALE GENOMIC DNA]</scope>
    <source>
        <strain>1710b</strain>
    </source>
</reference>
<keyword id="KW-0001">2Fe-2S</keyword>
<keyword id="KW-0028">Amino-acid biosynthesis</keyword>
<keyword id="KW-0100">Branched-chain amino acid biosynthesis</keyword>
<keyword id="KW-0408">Iron</keyword>
<keyword id="KW-0411">Iron-sulfur</keyword>
<keyword id="KW-0456">Lyase</keyword>
<keyword id="KW-0460">Magnesium</keyword>
<keyword id="KW-0479">Metal-binding</keyword>